<comment type="function">
    <text evidence="1">Synthesizes alpha-1,4-glucan chains using ADP-glucose.</text>
</comment>
<comment type="catalytic activity">
    <reaction evidence="1">
        <text>[(1-&gt;4)-alpha-D-glucosyl](n) + ADP-alpha-D-glucose = [(1-&gt;4)-alpha-D-glucosyl](n+1) + ADP + H(+)</text>
        <dbReference type="Rhea" id="RHEA:18189"/>
        <dbReference type="Rhea" id="RHEA-COMP:9584"/>
        <dbReference type="Rhea" id="RHEA-COMP:9587"/>
        <dbReference type="ChEBI" id="CHEBI:15378"/>
        <dbReference type="ChEBI" id="CHEBI:15444"/>
        <dbReference type="ChEBI" id="CHEBI:57498"/>
        <dbReference type="ChEBI" id="CHEBI:456216"/>
        <dbReference type="EC" id="2.4.1.21"/>
    </reaction>
</comment>
<comment type="pathway">
    <text evidence="1">Glycan biosynthesis; glycogen biosynthesis.</text>
</comment>
<comment type="similarity">
    <text evidence="1">Belongs to the glycosyltransferase 1 family. Bacterial/plant glycogen synthase subfamily.</text>
</comment>
<sequence length="477" mass="52822">MQVLHVCSEMFPLLKTGGLADVIGALPAAQIADGVDARVLLPAFPDIRRGVTDAQVVSRRDTFAGHITLLFGHYNGVGIYLIDAPHLYDRPGSPYHDTNLFAYTDNVLRFALLGWVGAEMASGLDPFWRPDVVHAHDWHAGLAPAYLAARGRPAKSVFTVHNLAYQGMFYAHHMNDIQLPWSFFNIHGLEFNGQISFLKAGLYYADHITAVSPTYAREITEPQFAYGMEGLLQQRHREGRLSGVLNGVDEKIWSPETDLLLASRYTRDTLEDKAENKRQLQIAMGLKVDDKVPLFAVVSRLTSQKGLDLVLEALPGLLEQGGQLALLGAGDPVLQEGFLAAAAEYPGQVGVQIGYHEAFSHRIMGGADVILVPSRFEPCGLTQLYGLKYGTLPLVRRTGGLADTVSDCSLENLADGVASGFVFEDSNAWSLLRAIRRAFVLWSRPSLWRFVQRQAMAMDFSWQVAAKSYRELYYRLK</sequence>
<name>GLGA_ECO81</name>
<dbReference type="EC" id="2.4.1.21" evidence="1"/>
<dbReference type="EMBL" id="CU928162">
    <property type="protein sequence ID" value="CAR10094.1"/>
    <property type="molecule type" value="Genomic_DNA"/>
</dbReference>
<dbReference type="RefSeq" id="WP_001197646.1">
    <property type="nucleotide sequence ID" value="NC_011745.1"/>
</dbReference>
<dbReference type="SMR" id="B7N176"/>
<dbReference type="CAZy" id="GT5">
    <property type="family name" value="Glycosyltransferase Family 5"/>
</dbReference>
<dbReference type="GeneID" id="75202274"/>
<dbReference type="KEGG" id="ecq:ECED1_4104"/>
<dbReference type="HOGENOM" id="CLU_009583_18_2_6"/>
<dbReference type="UniPathway" id="UPA00164"/>
<dbReference type="Proteomes" id="UP000000748">
    <property type="component" value="Chromosome"/>
</dbReference>
<dbReference type="GO" id="GO:0005829">
    <property type="term" value="C:cytosol"/>
    <property type="evidence" value="ECO:0007669"/>
    <property type="project" value="TreeGrafter"/>
</dbReference>
<dbReference type="GO" id="GO:0009011">
    <property type="term" value="F:alpha-1,4-glucan glucosyltransferase (ADP-glucose donor) activity"/>
    <property type="evidence" value="ECO:0007669"/>
    <property type="project" value="UniProtKB-UniRule"/>
</dbReference>
<dbReference type="GO" id="GO:0004373">
    <property type="term" value="F:alpha-1,4-glucan glucosyltransferase (UDP-glucose donor) activity"/>
    <property type="evidence" value="ECO:0007669"/>
    <property type="project" value="InterPro"/>
</dbReference>
<dbReference type="GO" id="GO:0005978">
    <property type="term" value="P:glycogen biosynthetic process"/>
    <property type="evidence" value="ECO:0007669"/>
    <property type="project" value="UniProtKB-UniRule"/>
</dbReference>
<dbReference type="CDD" id="cd03791">
    <property type="entry name" value="GT5_Glycogen_synthase_DULL1-like"/>
    <property type="match status" value="1"/>
</dbReference>
<dbReference type="FunFam" id="3.40.50.2000:FF:000008">
    <property type="entry name" value="Glycogen synthase"/>
    <property type="match status" value="1"/>
</dbReference>
<dbReference type="FunFam" id="3.40.50.2000:FF:000011">
    <property type="entry name" value="Glycogen synthase"/>
    <property type="match status" value="1"/>
</dbReference>
<dbReference type="Gene3D" id="3.40.50.2000">
    <property type="entry name" value="Glycogen Phosphorylase B"/>
    <property type="match status" value="2"/>
</dbReference>
<dbReference type="HAMAP" id="MF_00484">
    <property type="entry name" value="Glycogen_synth"/>
    <property type="match status" value="1"/>
</dbReference>
<dbReference type="InterPro" id="IPR001296">
    <property type="entry name" value="Glyco_trans_1"/>
</dbReference>
<dbReference type="InterPro" id="IPR011835">
    <property type="entry name" value="GS/SS"/>
</dbReference>
<dbReference type="InterPro" id="IPR013534">
    <property type="entry name" value="Starch_synth_cat_dom"/>
</dbReference>
<dbReference type="NCBIfam" id="TIGR02095">
    <property type="entry name" value="glgA"/>
    <property type="match status" value="1"/>
</dbReference>
<dbReference type="NCBIfam" id="NF001899">
    <property type="entry name" value="PRK00654.1-2"/>
    <property type="match status" value="1"/>
</dbReference>
<dbReference type="PANTHER" id="PTHR45825:SF11">
    <property type="entry name" value="ALPHA AMYLASE DOMAIN-CONTAINING PROTEIN"/>
    <property type="match status" value="1"/>
</dbReference>
<dbReference type="PANTHER" id="PTHR45825">
    <property type="entry name" value="GRANULE-BOUND STARCH SYNTHASE 1, CHLOROPLASTIC/AMYLOPLASTIC"/>
    <property type="match status" value="1"/>
</dbReference>
<dbReference type="Pfam" id="PF08323">
    <property type="entry name" value="Glyco_transf_5"/>
    <property type="match status" value="1"/>
</dbReference>
<dbReference type="Pfam" id="PF00534">
    <property type="entry name" value="Glycos_transf_1"/>
    <property type="match status" value="1"/>
</dbReference>
<dbReference type="SUPFAM" id="SSF53756">
    <property type="entry name" value="UDP-Glycosyltransferase/glycogen phosphorylase"/>
    <property type="match status" value="1"/>
</dbReference>
<reference key="1">
    <citation type="journal article" date="2009" name="PLoS Genet.">
        <title>Organised genome dynamics in the Escherichia coli species results in highly diverse adaptive paths.</title>
        <authorList>
            <person name="Touchon M."/>
            <person name="Hoede C."/>
            <person name="Tenaillon O."/>
            <person name="Barbe V."/>
            <person name="Baeriswyl S."/>
            <person name="Bidet P."/>
            <person name="Bingen E."/>
            <person name="Bonacorsi S."/>
            <person name="Bouchier C."/>
            <person name="Bouvet O."/>
            <person name="Calteau A."/>
            <person name="Chiapello H."/>
            <person name="Clermont O."/>
            <person name="Cruveiller S."/>
            <person name="Danchin A."/>
            <person name="Diard M."/>
            <person name="Dossat C."/>
            <person name="Karoui M.E."/>
            <person name="Frapy E."/>
            <person name="Garry L."/>
            <person name="Ghigo J.M."/>
            <person name="Gilles A.M."/>
            <person name="Johnson J."/>
            <person name="Le Bouguenec C."/>
            <person name="Lescat M."/>
            <person name="Mangenot S."/>
            <person name="Martinez-Jehanne V."/>
            <person name="Matic I."/>
            <person name="Nassif X."/>
            <person name="Oztas S."/>
            <person name="Petit M.A."/>
            <person name="Pichon C."/>
            <person name="Rouy Z."/>
            <person name="Ruf C.S."/>
            <person name="Schneider D."/>
            <person name="Tourret J."/>
            <person name="Vacherie B."/>
            <person name="Vallenet D."/>
            <person name="Medigue C."/>
            <person name="Rocha E.P.C."/>
            <person name="Denamur E."/>
        </authorList>
    </citation>
    <scope>NUCLEOTIDE SEQUENCE [LARGE SCALE GENOMIC DNA]</scope>
    <source>
        <strain>ED1a</strain>
    </source>
</reference>
<protein>
    <recommendedName>
        <fullName evidence="1">Glycogen synthase</fullName>
        <ecNumber evidence="1">2.4.1.21</ecNumber>
    </recommendedName>
    <alternativeName>
        <fullName evidence="1">Starch [bacterial glycogen] synthase</fullName>
    </alternativeName>
</protein>
<accession>B7N176</accession>
<evidence type="ECO:0000255" key="1">
    <source>
        <dbReference type="HAMAP-Rule" id="MF_00484"/>
    </source>
</evidence>
<organism>
    <name type="scientific">Escherichia coli O81 (strain ED1a)</name>
    <dbReference type="NCBI Taxonomy" id="585397"/>
    <lineage>
        <taxon>Bacteria</taxon>
        <taxon>Pseudomonadati</taxon>
        <taxon>Pseudomonadota</taxon>
        <taxon>Gammaproteobacteria</taxon>
        <taxon>Enterobacterales</taxon>
        <taxon>Enterobacteriaceae</taxon>
        <taxon>Escherichia</taxon>
    </lineage>
</organism>
<keyword id="KW-0320">Glycogen biosynthesis</keyword>
<keyword id="KW-0328">Glycosyltransferase</keyword>
<keyword id="KW-0808">Transferase</keyword>
<feature type="chain" id="PRO_1000135650" description="Glycogen synthase">
    <location>
        <begin position="1"/>
        <end position="477"/>
    </location>
</feature>
<feature type="binding site" evidence="1">
    <location>
        <position position="15"/>
    </location>
    <ligand>
        <name>ADP-alpha-D-glucose</name>
        <dbReference type="ChEBI" id="CHEBI:57498"/>
    </ligand>
</feature>
<proteinExistence type="inferred from homology"/>
<gene>
    <name evidence="1" type="primary">glgA</name>
    <name type="ordered locus">ECED1_4104</name>
</gene>